<sequence>MRGEFYQQLTNDLETARAEGLFKEERIITSAQQADITVADGSHVINFCANNYLGLANHPDLIAAAKAGMDSHGFGMASVRFICGTQDSHKELEQKLAAFLGMEDAILYSSCFDANGGLFETLLGAEDAIISDALNHASIIDGVRLCKAKRYRYANNDMQELEARLKEAREAGARHVLIATDGVFSMDGVIANLKGVCDLADKYDALVMVDDSHAVGFVGENGRGSHEYCDVMGRVDIITGTLGKALGGASGGYTAARKEVVEWLRQRSRPYLFSNSLAPAIVAASIKVLEMVEAGSELRDRLWANARQFREQMSAAGFTLAGADHAIIPVMLGDAVVAQKFARELQKEGIYVTGFFYPVVPKGQARIRTQMSAAHTPEQITRAVEAFTRIGKQLGVIA</sequence>
<name>KBL_ECOLI</name>
<reference key="1">
    <citation type="journal article" date="1988" name="Nucleic Acids Res.">
        <title>Nucleotide sequence of the 2-amino-3-ketobutyrate coenzyme A ligase (kbl) gene of E. coli.</title>
        <authorList>
            <person name="Aronson B.D."/>
            <person name="Ravnikar P.D."/>
            <person name="Somerville R.L."/>
        </authorList>
    </citation>
    <scope>NUCLEOTIDE SEQUENCE [GENOMIC DNA]</scope>
    <source>
        <strain>K12</strain>
    </source>
</reference>
<reference key="2">
    <citation type="journal article" date="1994" name="Nucleic Acids Res.">
        <title>Analysis of the Escherichia coli genome. V. DNA sequence of the region from 76.0 to 81.5 minutes.</title>
        <authorList>
            <person name="Sofia H.J."/>
            <person name="Burland V."/>
            <person name="Daniels D.L."/>
            <person name="Plunkett G. III"/>
            <person name="Blattner F.R."/>
        </authorList>
    </citation>
    <scope>NUCLEOTIDE SEQUENCE [LARGE SCALE GENOMIC DNA]</scope>
    <source>
        <strain>K12 / MG1655 / ATCC 47076</strain>
    </source>
</reference>
<reference key="3">
    <citation type="journal article" date="1997" name="Science">
        <title>The complete genome sequence of Escherichia coli K-12.</title>
        <authorList>
            <person name="Blattner F.R."/>
            <person name="Plunkett G. III"/>
            <person name="Bloch C.A."/>
            <person name="Perna N.T."/>
            <person name="Burland V."/>
            <person name="Riley M."/>
            <person name="Collado-Vides J."/>
            <person name="Glasner J.D."/>
            <person name="Rode C.K."/>
            <person name="Mayhew G.F."/>
            <person name="Gregor J."/>
            <person name="Davis N.W."/>
            <person name="Kirkpatrick H.A."/>
            <person name="Goeden M.A."/>
            <person name="Rose D.J."/>
            <person name="Mau B."/>
            <person name="Shao Y."/>
        </authorList>
    </citation>
    <scope>NUCLEOTIDE SEQUENCE [LARGE SCALE GENOMIC DNA]</scope>
    <source>
        <strain>K12 / MG1655 / ATCC 47076</strain>
    </source>
</reference>
<reference key="4">
    <citation type="journal article" date="2006" name="Mol. Syst. Biol.">
        <title>Highly accurate genome sequences of Escherichia coli K-12 strains MG1655 and W3110.</title>
        <authorList>
            <person name="Hayashi K."/>
            <person name="Morooka N."/>
            <person name="Yamamoto Y."/>
            <person name="Fujita K."/>
            <person name="Isono K."/>
            <person name="Choi S."/>
            <person name="Ohtsubo E."/>
            <person name="Baba T."/>
            <person name="Wanner B.L."/>
            <person name="Mori H."/>
            <person name="Horiuchi T."/>
        </authorList>
    </citation>
    <scope>NUCLEOTIDE SEQUENCE [LARGE SCALE GENOMIC DNA]</scope>
    <source>
        <strain>K12 / W3110 / ATCC 27325 / DSM 5911</strain>
    </source>
</reference>
<reference key="5">
    <citation type="journal article" date="1987" name="J. Biol. Chem.">
        <title>Purification, properties, and N-terminal amino acid sequence of homogeneous Escherichia coli 2-amino-3-ketobutyrate CoA ligase, a pyridoxal phosphate-dependent enzyme.</title>
        <authorList>
            <person name="Mukherjee J.J."/>
            <person name="Dekker E.E."/>
        </authorList>
    </citation>
    <scope>NUCLEOTIDE SEQUENCE [GENOMIC DNA] OF 1-21</scope>
</reference>
<reference key="6">
    <citation type="journal article" date="1990" name="Biochim. Biophys. Acta">
        <title>2-amino-3-ketobutyrate CoA ligase of Escherichia coli: stoichiometry of pyridoxal phosphate binding and location of the pyridoxyllysine peptide in the primary structure of the enzyme.</title>
        <authorList>
            <person name="Mukherjee J.J."/>
            <person name="Dekker E.E."/>
        </authorList>
    </citation>
    <scope>PROTEIN SEQUENCE OF 235-257</scope>
    <scope>FUNCTION</scope>
    <scope>COFACTOR</scope>
    <scope>CATALYTIC ACTIVITY</scope>
    <scope>PYRIDOXAL PHOSPHATE AT LYS-244</scope>
    <scope>SUBUNIT</scope>
</reference>
<reference key="7">
    <citation type="journal article" date="1997" name="Electrophoresis">
        <title>Escherichia coli proteome analysis using the gene-protein database.</title>
        <authorList>
            <person name="VanBogelen R.A."/>
            <person name="Abshire K.Z."/>
            <person name="Moldover B."/>
            <person name="Olson E.R."/>
            <person name="Neidhardt F.C."/>
        </authorList>
    </citation>
    <scope>IDENTIFICATION BY 2D-GEL</scope>
</reference>
<reference key="8">
    <citation type="journal article" date="2001" name="Biochemistry">
        <title>Three-dimensional structure of 2-amino-3-ketobutyrate CoA ligase from Escherichia coli complexed with a PLP-substrate intermediate: inferred reaction mechanism.</title>
        <authorList>
            <person name="Schmidt A."/>
            <person name="Sivaraman J."/>
            <person name="Li Y."/>
            <person name="Larocque R."/>
            <person name="Barbosa J.A."/>
            <person name="Smith C."/>
            <person name="Matte A."/>
            <person name="Schrag J.D."/>
            <person name="Cygler M."/>
        </authorList>
    </citation>
    <scope>X-RAY CRYSTALLOGRAPHY (2.0 ANGSTROMS) IN COMPLEX WITH SUBSTRATE AND PYRIDOXAL PHOSPHATE</scope>
    <scope>REACTION MECHANISM</scope>
    <scope>SUBUNIT</scope>
</reference>
<dbReference type="EC" id="2.3.1.29" evidence="1"/>
<dbReference type="EMBL" id="X06690">
    <property type="protein sequence ID" value="CAA29883.1"/>
    <property type="molecule type" value="Genomic_DNA"/>
</dbReference>
<dbReference type="EMBL" id="U00039">
    <property type="protein sequence ID" value="AAB18594.1"/>
    <property type="molecule type" value="Genomic_DNA"/>
</dbReference>
<dbReference type="EMBL" id="U00096">
    <property type="protein sequence ID" value="AAC76641.1"/>
    <property type="molecule type" value="Genomic_DNA"/>
</dbReference>
<dbReference type="EMBL" id="AP009048">
    <property type="protein sequence ID" value="BAE77675.1"/>
    <property type="molecule type" value="Genomic_DNA"/>
</dbReference>
<dbReference type="PIR" id="C65162">
    <property type="entry name" value="XUECGA"/>
</dbReference>
<dbReference type="RefSeq" id="NP_418074.1">
    <property type="nucleotide sequence ID" value="NC_000913.3"/>
</dbReference>
<dbReference type="RefSeq" id="WP_001213834.1">
    <property type="nucleotide sequence ID" value="NZ_STEB01000024.1"/>
</dbReference>
<dbReference type="PDB" id="1FC4">
    <property type="method" value="X-ray"/>
    <property type="resolution" value="2.00 A"/>
    <property type="chains" value="A/B=1-398"/>
</dbReference>
<dbReference type="PDBsum" id="1FC4"/>
<dbReference type="SMR" id="P0AB77"/>
<dbReference type="BioGRID" id="4263301">
    <property type="interactions" value="22"/>
</dbReference>
<dbReference type="BioGRID" id="852445">
    <property type="interactions" value="1"/>
</dbReference>
<dbReference type="DIP" id="DIP-48030N"/>
<dbReference type="FunCoup" id="P0AB77">
    <property type="interactions" value="606"/>
</dbReference>
<dbReference type="IntAct" id="P0AB77">
    <property type="interactions" value="7"/>
</dbReference>
<dbReference type="STRING" id="511145.b3617"/>
<dbReference type="DrugBank" id="DB03915">
    <property type="generic name" value="2-Amino-3-Ketobutyric Acid"/>
</dbReference>
<dbReference type="jPOST" id="P0AB77"/>
<dbReference type="PaxDb" id="511145-b3617"/>
<dbReference type="EnsemblBacteria" id="AAC76641">
    <property type="protein sequence ID" value="AAC76641"/>
    <property type="gene ID" value="b3617"/>
</dbReference>
<dbReference type="GeneID" id="75202189"/>
<dbReference type="GeneID" id="948138"/>
<dbReference type="KEGG" id="ecj:JW3592"/>
<dbReference type="KEGG" id="eco:b3617"/>
<dbReference type="KEGG" id="ecoc:C3026_19610"/>
<dbReference type="PATRIC" id="fig|1411691.4.peg.3089"/>
<dbReference type="EchoBASE" id="EB0507"/>
<dbReference type="eggNOG" id="COG0156">
    <property type="taxonomic scope" value="Bacteria"/>
</dbReference>
<dbReference type="HOGENOM" id="CLU_015846_11_0_6"/>
<dbReference type="InParanoid" id="P0AB77"/>
<dbReference type="OMA" id="GTHEYCD"/>
<dbReference type="OrthoDB" id="9807157at2"/>
<dbReference type="PhylomeDB" id="P0AB77"/>
<dbReference type="BioCyc" id="EcoCyc:AKBLIG-MONOMER"/>
<dbReference type="BioCyc" id="MetaCyc:AKBLIG-MONOMER"/>
<dbReference type="BRENDA" id="2.3.1.29">
    <property type="organism ID" value="2026"/>
</dbReference>
<dbReference type="SABIO-RK" id="P0AB77"/>
<dbReference type="UniPathway" id="UPA00046">
    <property type="reaction ID" value="UER00506"/>
</dbReference>
<dbReference type="EvolutionaryTrace" id="P0AB77"/>
<dbReference type="PRO" id="PR:P0AB77"/>
<dbReference type="Proteomes" id="UP000000625">
    <property type="component" value="Chromosome"/>
</dbReference>
<dbReference type="GO" id="GO:0005737">
    <property type="term" value="C:cytoplasm"/>
    <property type="evidence" value="ECO:0000314"/>
    <property type="project" value="EcoliWiki"/>
</dbReference>
<dbReference type="GO" id="GO:0005829">
    <property type="term" value="C:cytosol"/>
    <property type="evidence" value="ECO:0000314"/>
    <property type="project" value="EcoCyc"/>
</dbReference>
<dbReference type="GO" id="GO:0008890">
    <property type="term" value="F:glycine C-acetyltransferase activity"/>
    <property type="evidence" value="ECO:0000314"/>
    <property type="project" value="EcoCyc"/>
</dbReference>
<dbReference type="GO" id="GO:0016874">
    <property type="term" value="F:ligase activity"/>
    <property type="evidence" value="ECO:0000314"/>
    <property type="project" value="EcoliWiki"/>
</dbReference>
<dbReference type="GO" id="GO:0046872">
    <property type="term" value="F:metal ion binding"/>
    <property type="evidence" value="ECO:0000314"/>
    <property type="project" value="EcoliWiki"/>
</dbReference>
<dbReference type="GO" id="GO:0030170">
    <property type="term" value="F:pyridoxal phosphate binding"/>
    <property type="evidence" value="ECO:0000314"/>
    <property type="project" value="EcoliWiki"/>
</dbReference>
<dbReference type="GO" id="GO:0009058">
    <property type="term" value="P:biosynthetic process"/>
    <property type="evidence" value="ECO:0007669"/>
    <property type="project" value="InterPro"/>
</dbReference>
<dbReference type="GO" id="GO:0019518">
    <property type="term" value="P:L-threonine catabolic process to glycine"/>
    <property type="evidence" value="ECO:0007669"/>
    <property type="project" value="UniProtKB-UniRule"/>
</dbReference>
<dbReference type="CDD" id="cd06454">
    <property type="entry name" value="KBL_like"/>
    <property type="match status" value="1"/>
</dbReference>
<dbReference type="FunFam" id="3.90.1150.10:FF:000004">
    <property type="entry name" value="2-amino-3-ketobutyrate coenzyme A ligase"/>
    <property type="match status" value="1"/>
</dbReference>
<dbReference type="FunFam" id="3.40.640.10:FF:000006">
    <property type="entry name" value="5-aminolevulinate synthase, mitochondrial"/>
    <property type="match status" value="1"/>
</dbReference>
<dbReference type="Gene3D" id="3.90.1150.10">
    <property type="entry name" value="Aspartate Aminotransferase, domain 1"/>
    <property type="match status" value="1"/>
</dbReference>
<dbReference type="Gene3D" id="3.40.640.10">
    <property type="entry name" value="Type I PLP-dependent aspartate aminotransferase-like (Major domain)"/>
    <property type="match status" value="1"/>
</dbReference>
<dbReference type="HAMAP" id="MF_00985">
    <property type="entry name" value="2am3keto_CoA_ligase"/>
    <property type="match status" value="1"/>
</dbReference>
<dbReference type="InterPro" id="IPR011282">
    <property type="entry name" value="2am3keto_CoA_ligase"/>
</dbReference>
<dbReference type="InterPro" id="IPR001917">
    <property type="entry name" value="Aminotrans_II_pyridoxalP_BS"/>
</dbReference>
<dbReference type="InterPro" id="IPR004839">
    <property type="entry name" value="Aminotransferase_I/II_large"/>
</dbReference>
<dbReference type="InterPro" id="IPR050087">
    <property type="entry name" value="AON_synthase_class-II"/>
</dbReference>
<dbReference type="InterPro" id="IPR015424">
    <property type="entry name" value="PyrdxlP-dep_Trfase"/>
</dbReference>
<dbReference type="InterPro" id="IPR015421">
    <property type="entry name" value="PyrdxlP-dep_Trfase_major"/>
</dbReference>
<dbReference type="InterPro" id="IPR015422">
    <property type="entry name" value="PyrdxlP-dep_Trfase_small"/>
</dbReference>
<dbReference type="NCBIfam" id="TIGR01822">
    <property type="entry name" value="2am3keto_CoA"/>
    <property type="match status" value="1"/>
</dbReference>
<dbReference type="NCBIfam" id="NF005394">
    <property type="entry name" value="PRK06939.1"/>
    <property type="match status" value="1"/>
</dbReference>
<dbReference type="PANTHER" id="PTHR13693:SF102">
    <property type="entry name" value="2-AMINO-3-KETOBUTYRATE COENZYME A LIGASE, MITOCHONDRIAL"/>
    <property type="match status" value="1"/>
</dbReference>
<dbReference type="PANTHER" id="PTHR13693">
    <property type="entry name" value="CLASS II AMINOTRANSFERASE/8-AMINO-7-OXONONANOATE SYNTHASE"/>
    <property type="match status" value="1"/>
</dbReference>
<dbReference type="Pfam" id="PF00155">
    <property type="entry name" value="Aminotran_1_2"/>
    <property type="match status" value="1"/>
</dbReference>
<dbReference type="SUPFAM" id="SSF53383">
    <property type="entry name" value="PLP-dependent transferases"/>
    <property type="match status" value="1"/>
</dbReference>
<dbReference type="PROSITE" id="PS00599">
    <property type="entry name" value="AA_TRANSFER_CLASS_2"/>
    <property type="match status" value="1"/>
</dbReference>
<gene>
    <name evidence="1" type="primary">kbl</name>
    <name type="ordered locus">b3617</name>
    <name type="ordered locus">JW3592</name>
</gene>
<keyword id="KW-0002">3D-structure</keyword>
<keyword id="KW-0012">Acyltransferase</keyword>
<keyword id="KW-0903">Direct protein sequencing</keyword>
<keyword id="KW-0663">Pyridoxal phosphate</keyword>
<keyword id="KW-1185">Reference proteome</keyword>
<keyword id="KW-0808">Transferase</keyword>
<organism>
    <name type="scientific">Escherichia coli (strain K12)</name>
    <dbReference type="NCBI Taxonomy" id="83333"/>
    <lineage>
        <taxon>Bacteria</taxon>
        <taxon>Pseudomonadati</taxon>
        <taxon>Pseudomonadota</taxon>
        <taxon>Gammaproteobacteria</taxon>
        <taxon>Enterobacterales</taxon>
        <taxon>Enterobacteriaceae</taxon>
        <taxon>Escherichia</taxon>
    </lineage>
</organism>
<comment type="function">
    <text evidence="1 3">Catalyzes the cleavage of 2-amino-3-ketobutyrate to glycine and acetyl-CoA.</text>
</comment>
<comment type="catalytic activity">
    <reaction evidence="1 3">
        <text>glycine + acetyl-CoA = (2S)-2-amino-3-oxobutanoate + CoA</text>
        <dbReference type="Rhea" id="RHEA:20736"/>
        <dbReference type="ChEBI" id="CHEBI:57287"/>
        <dbReference type="ChEBI" id="CHEBI:57288"/>
        <dbReference type="ChEBI" id="CHEBI:57305"/>
        <dbReference type="ChEBI" id="CHEBI:78948"/>
        <dbReference type="EC" id="2.3.1.29"/>
    </reaction>
</comment>
<comment type="cofactor">
    <cofactor evidence="1 3">
        <name>pyridoxal 5'-phosphate</name>
        <dbReference type="ChEBI" id="CHEBI:597326"/>
    </cofactor>
    <text evidence="1 3">Binds 1 pyridoxal phosphate per subunit.</text>
</comment>
<comment type="pathway">
    <text evidence="1">Amino-acid degradation; L-threonine degradation via oxydo-reductase pathway; glycine from L-threonine: step 2/2.</text>
</comment>
<comment type="subunit">
    <text evidence="1 2 3">Homodimer.</text>
</comment>
<comment type="similarity">
    <text evidence="1">Belongs to the class-II pyridoxal-phosphate-dependent aminotransferase family.</text>
</comment>
<protein>
    <recommendedName>
        <fullName evidence="1">2-amino-3-ketobutyrate coenzyme A ligase</fullName>
        <shortName evidence="1">AKB ligase</shortName>
        <ecNumber evidence="1">2.3.1.29</ecNumber>
    </recommendedName>
    <alternativeName>
        <fullName evidence="1">Glycine acetyltransferase</fullName>
    </alternativeName>
</protein>
<feature type="chain" id="PRO_0000163843" description="2-amino-3-ketobutyrate coenzyme A ligase">
    <location>
        <begin position="1"/>
        <end position="398"/>
    </location>
</feature>
<feature type="binding site" description="in other chain">
    <location>
        <begin position="111"/>
        <end position="112"/>
    </location>
    <ligand>
        <name>pyridoxal 5'-phosphate</name>
        <dbReference type="ChEBI" id="CHEBI:597326"/>
        <note>ligand shared between dimeric partners</note>
    </ligand>
</feature>
<feature type="binding site" evidence="1 2">
    <location>
        <position position="136"/>
    </location>
    <ligand>
        <name>substrate</name>
    </ligand>
</feature>
<feature type="binding site" description="in other chain" evidence="1 2">
    <location>
        <position position="185"/>
    </location>
    <ligand>
        <name>pyridoxal 5'-phosphate</name>
        <dbReference type="ChEBI" id="CHEBI:597326"/>
        <note>ligand shared between dimeric partners</note>
    </ligand>
</feature>
<feature type="binding site" description="in other chain">
    <location>
        <begin position="210"/>
        <end position="213"/>
    </location>
    <ligand>
        <name>pyridoxal 5'-phosphate</name>
        <dbReference type="ChEBI" id="CHEBI:597326"/>
        <note>ligand shared between dimeric partners</note>
    </ligand>
</feature>
<feature type="binding site" description="in other chain">
    <location>
        <begin position="241"/>
        <end position="244"/>
    </location>
    <ligand>
        <name>pyridoxal 5'-phosphate</name>
        <dbReference type="ChEBI" id="CHEBI:597326"/>
        <note>ligand shared between dimeric partners</note>
    </ligand>
</feature>
<feature type="binding site">
    <location>
        <begin position="274"/>
        <end position="275"/>
    </location>
    <ligand>
        <name>pyridoxal 5'-phosphate</name>
        <dbReference type="ChEBI" id="CHEBI:597326"/>
        <note>ligand shared between dimeric partners</note>
    </ligand>
</feature>
<feature type="binding site" evidence="1 2">
    <location>
        <position position="368"/>
    </location>
    <ligand>
        <name>substrate</name>
    </ligand>
</feature>
<feature type="modified residue" description="N6-(pyridoxal phosphate)lysine">
    <location>
        <position position="244"/>
    </location>
</feature>
<feature type="sequence conflict" description="In Ref. 1; CAA29883." evidence="4" ref="1">
    <original>H</original>
    <variation>Q</variation>
    <location>
        <position position="43"/>
    </location>
</feature>
<feature type="sequence conflict" description="In Ref. 1; CAA29883." evidence="4" ref="1">
    <original>A</original>
    <variation>R</variation>
    <location>
        <position position="171"/>
    </location>
</feature>
<feature type="sequence conflict" description="In Ref. 1; CAA29883." evidence="4" ref="1">
    <original>V</original>
    <variation>L</variation>
    <location>
        <position position="183"/>
    </location>
</feature>
<feature type="helix" evidence="5">
    <location>
        <begin position="1"/>
        <end position="18"/>
    </location>
</feature>
<feature type="strand" evidence="5">
    <location>
        <begin position="32"/>
        <end position="38"/>
    </location>
</feature>
<feature type="strand" evidence="5">
    <location>
        <begin position="43"/>
        <end position="46"/>
    </location>
</feature>
<feature type="helix" evidence="5">
    <location>
        <begin position="59"/>
        <end position="72"/>
    </location>
</feature>
<feature type="turn" evidence="5">
    <location>
        <begin position="80"/>
        <end position="83"/>
    </location>
</feature>
<feature type="helix" evidence="5">
    <location>
        <begin position="87"/>
        <end position="100"/>
    </location>
</feature>
<feature type="strand" evidence="5">
    <location>
        <begin position="103"/>
        <end position="109"/>
    </location>
</feature>
<feature type="helix" evidence="5">
    <location>
        <begin position="111"/>
        <end position="116"/>
    </location>
</feature>
<feature type="helix" evidence="5">
    <location>
        <begin position="119"/>
        <end position="122"/>
    </location>
</feature>
<feature type="strand" evidence="5">
    <location>
        <begin position="128"/>
        <end position="132"/>
    </location>
</feature>
<feature type="helix" evidence="5">
    <location>
        <begin position="137"/>
        <end position="144"/>
    </location>
</feature>
<feature type="strand" evidence="5">
    <location>
        <begin position="148"/>
        <end position="153"/>
    </location>
</feature>
<feature type="helix" evidence="5">
    <location>
        <begin position="158"/>
        <end position="170"/>
    </location>
</feature>
<feature type="strand" evidence="5">
    <location>
        <begin position="174"/>
        <end position="183"/>
    </location>
</feature>
<feature type="turn" evidence="5">
    <location>
        <begin position="185"/>
        <end position="187"/>
    </location>
</feature>
<feature type="helix" evidence="5">
    <location>
        <begin position="193"/>
        <end position="202"/>
    </location>
</feature>
<feature type="strand" evidence="5">
    <location>
        <begin position="205"/>
        <end position="210"/>
    </location>
</feature>
<feature type="turn" evidence="5">
    <location>
        <begin position="212"/>
        <end position="217"/>
    </location>
</feature>
<feature type="helix" evidence="5">
    <location>
        <begin position="225"/>
        <end position="228"/>
    </location>
</feature>
<feature type="strand" evidence="5">
    <location>
        <begin position="236"/>
        <end position="244"/>
    </location>
</feature>
<feature type="strand" evidence="5">
    <location>
        <begin position="248"/>
        <end position="250"/>
    </location>
</feature>
<feature type="strand" evidence="5">
    <location>
        <begin position="252"/>
        <end position="256"/>
    </location>
</feature>
<feature type="helix" evidence="5">
    <location>
        <begin position="258"/>
        <end position="267"/>
    </location>
</feature>
<feature type="helix" evidence="5">
    <location>
        <begin position="269"/>
        <end position="273"/>
    </location>
</feature>
<feature type="helix" evidence="5">
    <location>
        <begin position="279"/>
        <end position="293"/>
    </location>
</feature>
<feature type="helix" evidence="5">
    <location>
        <begin position="296"/>
        <end position="315"/>
    </location>
</feature>
<feature type="strand" evidence="5">
    <location>
        <begin position="323"/>
        <end position="333"/>
    </location>
</feature>
<feature type="helix" evidence="5">
    <location>
        <begin position="335"/>
        <end position="347"/>
    </location>
</feature>
<feature type="strand" evidence="5">
    <location>
        <begin position="365"/>
        <end position="370"/>
    </location>
</feature>
<feature type="helix" evidence="5">
    <location>
        <begin position="377"/>
        <end position="393"/>
    </location>
</feature>
<accession>P0AB77</accession>
<accession>P07912</accession>
<accession>Q2M7T1</accession>
<proteinExistence type="evidence at protein level"/>
<evidence type="ECO:0000255" key="1">
    <source>
        <dbReference type="HAMAP-Rule" id="MF_00985"/>
    </source>
</evidence>
<evidence type="ECO:0000269" key="2">
    <source>
    </source>
</evidence>
<evidence type="ECO:0000269" key="3">
    <source>
    </source>
</evidence>
<evidence type="ECO:0000305" key="4"/>
<evidence type="ECO:0007829" key="5">
    <source>
        <dbReference type="PDB" id="1FC4"/>
    </source>
</evidence>